<feature type="chain" id="PRO_1000100594" description="Adenylate kinase">
    <location>
        <begin position="1"/>
        <end position="186"/>
    </location>
</feature>
<feature type="region of interest" description="NMP" evidence="1">
    <location>
        <begin position="32"/>
        <end position="61"/>
    </location>
</feature>
<feature type="region of interest" description="LID" evidence="1">
    <location>
        <begin position="127"/>
        <end position="133"/>
    </location>
</feature>
<feature type="binding site" evidence="1">
    <location>
        <begin position="12"/>
        <end position="17"/>
    </location>
    <ligand>
        <name>ATP</name>
        <dbReference type="ChEBI" id="CHEBI:30616"/>
    </ligand>
</feature>
<feature type="binding site" evidence="1">
    <location>
        <position position="33"/>
    </location>
    <ligand>
        <name>AMP</name>
        <dbReference type="ChEBI" id="CHEBI:456215"/>
    </ligand>
</feature>
<feature type="binding site" evidence="1">
    <location>
        <position position="38"/>
    </location>
    <ligand>
        <name>AMP</name>
        <dbReference type="ChEBI" id="CHEBI:456215"/>
    </ligand>
</feature>
<feature type="binding site" evidence="1">
    <location>
        <begin position="59"/>
        <end position="61"/>
    </location>
    <ligand>
        <name>AMP</name>
        <dbReference type="ChEBI" id="CHEBI:456215"/>
    </ligand>
</feature>
<feature type="binding site" evidence="1">
    <location>
        <begin position="86"/>
        <end position="89"/>
    </location>
    <ligand>
        <name>AMP</name>
        <dbReference type="ChEBI" id="CHEBI:456215"/>
    </ligand>
</feature>
<feature type="binding site" evidence="1">
    <location>
        <position position="93"/>
    </location>
    <ligand>
        <name>AMP</name>
        <dbReference type="ChEBI" id="CHEBI:456215"/>
    </ligand>
</feature>
<feature type="binding site" evidence="1">
    <location>
        <position position="128"/>
    </location>
    <ligand>
        <name>ATP</name>
        <dbReference type="ChEBI" id="CHEBI:30616"/>
    </ligand>
</feature>
<feature type="binding site" evidence="1">
    <location>
        <position position="130"/>
    </location>
    <ligand>
        <name>AMP</name>
        <dbReference type="ChEBI" id="CHEBI:456215"/>
    </ligand>
</feature>
<feature type="binding site" evidence="1">
    <location>
        <position position="141"/>
    </location>
    <ligand>
        <name>AMP</name>
        <dbReference type="ChEBI" id="CHEBI:456215"/>
    </ligand>
</feature>
<feature type="binding site" evidence="1">
    <location>
        <position position="169"/>
    </location>
    <ligand>
        <name>ATP</name>
        <dbReference type="ChEBI" id="CHEBI:30616"/>
    </ligand>
</feature>
<name>KAD_PROM4</name>
<proteinExistence type="inferred from homology"/>
<gene>
    <name evidence="1" type="primary">adk</name>
    <name type="ordered locus">P9211_16591</name>
</gene>
<accession>A9BCM8</accession>
<evidence type="ECO:0000255" key="1">
    <source>
        <dbReference type="HAMAP-Rule" id="MF_00235"/>
    </source>
</evidence>
<reference key="1">
    <citation type="journal article" date="2007" name="PLoS Genet.">
        <title>Patterns and implications of gene gain and loss in the evolution of Prochlorococcus.</title>
        <authorList>
            <person name="Kettler G.C."/>
            <person name="Martiny A.C."/>
            <person name="Huang K."/>
            <person name="Zucker J."/>
            <person name="Coleman M.L."/>
            <person name="Rodrigue S."/>
            <person name="Chen F."/>
            <person name="Lapidus A."/>
            <person name="Ferriera S."/>
            <person name="Johnson J."/>
            <person name="Steglich C."/>
            <person name="Church G.M."/>
            <person name="Richardson P."/>
            <person name="Chisholm S.W."/>
        </authorList>
    </citation>
    <scope>NUCLEOTIDE SEQUENCE [LARGE SCALE GENOMIC DNA]</scope>
    <source>
        <strain>MIT 9211</strain>
    </source>
</reference>
<sequence length="186" mass="20405">MKSRLLFLGPPGAGKGTQAKLLCENQGLIHLSTGDLLRAEVNAQSPLGKEAALIMNKGELVSDEIVLSIVQKRLSADAKSGWLLDGFPRNLIQAQSLQQLLENVSQPIQAVLLIELDDETLIKRLLSRGRSDDTQEVIRHRLEVYREKTAPLVDFYQSLGILVKIQGEGDVKDVALTIRSALGLVM</sequence>
<comment type="function">
    <text evidence="1">Catalyzes the reversible transfer of the terminal phosphate group between ATP and AMP. Plays an important role in cellular energy homeostasis and in adenine nucleotide metabolism.</text>
</comment>
<comment type="catalytic activity">
    <reaction evidence="1">
        <text>AMP + ATP = 2 ADP</text>
        <dbReference type="Rhea" id="RHEA:12973"/>
        <dbReference type="ChEBI" id="CHEBI:30616"/>
        <dbReference type="ChEBI" id="CHEBI:456215"/>
        <dbReference type="ChEBI" id="CHEBI:456216"/>
        <dbReference type="EC" id="2.7.4.3"/>
    </reaction>
</comment>
<comment type="pathway">
    <text evidence="1">Purine metabolism; AMP biosynthesis via salvage pathway; AMP from ADP: step 1/1.</text>
</comment>
<comment type="subunit">
    <text evidence="1">Monomer.</text>
</comment>
<comment type="subcellular location">
    <subcellularLocation>
        <location evidence="1">Cytoplasm</location>
    </subcellularLocation>
</comment>
<comment type="domain">
    <text evidence="1">Consists of three domains, a large central CORE domain and two small peripheral domains, NMPbind and LID, which undergo movements during catalysis. The LID domain closes over the site of phosphoryl transfer upon ATP binding. Assembling and dissambling the active center during each catalytic cycle provides an effective means to prevent ATP hydrolysis.</text>
</comment>
<comment type="similarity">
    <text evidence="1">Belongs to the adenylate kinase family.</text>
</comment>
<keyword id="KW-0067">ATP-binding</keyword>
<keyword id="KW-0963">Cytoplasm</keyword>
<keyword id="KW-0418">Kinase</keyword>
<keyword id="KW-0545">Nucleotide biosynthesis</keyword>
<keyword id="KW-0547">Nucleotide-binding</keyword>
<keyword id="KW-1185">Reference proteome</keyword>
<keyword id="KW-0808">Transferase</keyword>
<protein>
    <recommendedName>
        <fullName evidence="1">Adenylate kinase</fullName>
        <shortName evidence="1">AK</shortName>
        <ecNumber evidence="1">2.7.4.3</ecNumber>
    </recommendedName>
    <alternativeName>
        <fullName evidence="1">ATP-AMP transphosphorylase</fullName>
    </alternativeName>
    <alternativeName>
        <fullName evidence="1">ATP:AMP phosphotransferase</fullName>
    </alternativeName>
    <alternativeName>
        <fullName evidence="1">Adenylate monophosphate kinase</fullName>
    </alternativeName>
</protein>
<dbReference type="EC" id="2.7.4.3" evidence="1"/>
<dbReference type="EMBL" id="CP000878">
    <property type="protein sequence ID" value="ABX09590.1"/>
    <property type="molecule type" value="Genomic_DNA"/>
</dbReference>
<dbReference type="RefSeq" id="WP_012196210.1">
    <property type="nucleotide sequence ID" value="NC_009976.1"/>
</dbReference>
<dbReference type="SMR" id="A9BCM8"/>
<dbReference type="STRING" id="93059.P9211_16591"/>
<dbReference type="KEGG" id="pmj:P9211_16591"/>
<dbReference type="eggNOG" id="COG0563">
    <property type="taxonomic scope" value="Bacteria"/>
</dbReference>
<dbReference type="HOGENOM" id="CLU_032354_4_1_3"/>
<dbReference type="OrthoDB" id="9805030at2"/>
<dbReference type="UniPathway" id="UPA00588">
    <property type="reaction ID" value="UER00649"/>
</dbReference>
<dbReference type="Proteomes" id="UP000000788">
    <property type="component" value="Chromosome"/>
</dbReference>
<dbReference type="GO" id="GO:0005737">
    <property type="term" value="C:cytoplasm"/>
    <property type="evidence" value="ECO:0007669"/>
    <property type="project" value="UniProtKB-SubCell"/>
</dbReference>
<dbReference type="GO" id="GO:0004017">
    <property type="term" value="F:adenylate kinase activity"/>
    <property type="evidence" value="ECO:0007669"/>
    <property type="project" value="UniProtKB-UniRule"/>
</dbReference>
<dbReference type="GO" id="GO:0005524">
    <property type="term" value="F:ATP binding"/>
    <property type="evidence" value="ECO:0007669"/>
    <property type="project" value="UniProtKB-UniRule"/>
</dbReference>
<dbReference type="GO" id="GO:0044209">
    <property type="term" value="P:AMP salvage"/>
    <property type="evidence" value="ECO:0007669"/>
    <property type="project" value="UniProtKB-UniRule"/>
</dbReference>
<dbReference type="CDD" id="cd01428">
    <property type="entry name" value="ADK"/>
    <property type="match status" value="1"/>
</dbReference>
<dbReference type="Gene3D" id="3.40.50.300">
    <property type="entry name" value="P-loop containing nucleotide triphosphate hydrolases"/>
    <property type="match status" value="1"/>
</dbReference>
<dbReference type="HAMAP" id="MF_00235">
    <property type="entry name" value="Adenylate_kinase_Adk"/>
    <property type="match status" value="1"/>
</dbReference>
<dbReference type="InterPro" id="IPR000850">
    <property type="entry name" value="Adenylat/UMP-CMP_kin"/>
</dbReference>
<dbReference type="InterPro" id="IPR033690">
    <property type="entry name" value="Adenylat_kinase_CS"/>
</dbReference>
<dbReference type="InterPro" id="IPR027417">
    <property type="entry name" value="P-loop_NTPase"/>
</dbReference>
<dbReference type="NCBIfam" id="NF001381">
    <property type="entry name" value="PRK00279.1-3"/>
    <property type="match status" value="1"/>
</dbReference>
<dbReference type="NCBIfam" id="NF011100">
    <property type="entry name" value="PRK14527.1"/>
    <property type="match status" value="1"/>
</dbReference>
<dbReference type="NCBIfam" id="NF011104">
    <property type="entry name" value="PRK14531.1"/>
    <property type="match status" value="1"/>
</dbReference>
<dbReference type="NCBIfam" id="NF011105">
    <property type="entry name" value="PRK14532.1"/>
    <property type="match status" value="1"/>
</dbReference>
<dbReference type="PANTHER" id="PTHR23359">
    <property type="entry name" value="NUCLEOTIDE KINASE"/>
    <property type="match status" value="1"/>
</dbReference>
<dbReference type="Pfam" id="PF00406">
    <property type="entry name" value="ADK"/>
    <property type="match status" value="1"/>
</dbReference>
<dbReference type="PRINTS" id="PR00094">
    <property type="entry name" value="ADENYLTKNASE"/>
</dbReference>
<dbReference type="SUPFAM" id="SSF52540">
    <property type="entry name" value="P-loop containing nucleoside triphosphate hydrolases"/>
    <property type="match status" value="1"/>
</dbReference>
<dbReference type="PROSITE" id="PS00113">
    <property type="entry name" value="ADENYLATE_KINASE"/>
    <property type="match status" value="1"/>
</dbReference>
<organism>
    <name type="scientific">Prochlorococcus marinus (strain MIT 9211)</name>
    <dbReference type="NCBI Taxonomy" id="93059"/>
    <lineage>
        <taxon>Bacteria</taxon>
        <taxon>Bacillati</taxon>
        <taxon>Cyanobacteriota</taxon>
        <taxon>Cyanophyceae</taxon>
        <taxon>Synechococcales</taxon>
        <taxon>Prochlorococcaceae</taxon>
        <taxon>Prochlorococcus</taxon>
    </lineage>
</organism>